<sequence>MPVPNSEANEFQALQARIDADAKEIEQWWSEPRWNKTKRTYSAREIAIRRGTFPPLTYPSSVMAKKVYKVLEKHHKEGTVSRTFGALDPVQVSQMAKFLDTIYVSGWQCSSTASTSNEPGPDLADYPMDTVPNKVEHLFKAQQFHDRKQWENRAKATSQEELDAMGPAIDYMTPIIADADAGHGGLTAVFKLTKMFIERGAAGIHMEDQTSTNKKCGHMAGRCVIPVQEHINRLVTIRMCADIMHSELVIVARTDSEAATLISSTIDTRDHYFVVGATNPDIEPFAEYMDRAIMAGVSGDELQKLEAAWIEKAGLKLFHEAFADEVNKSSVSNKQEIIKKFNDKVGPLTETSHREAKKLAKELLGKDIFFDWDLPRVREGLYRYRGGTQCSVMRARAFAPYADLVWMESNYPDFEQAREFAEGVKAKYPDQWLAYNLSPSFNWPKAMSVDEQATFIERLGQLGYIWQFITLAGLHTTALAIHKFSEDFAREGMKAYAQNVQQIEMDEGVDVLKHQKWSGAEYIDGLLKLAQGGVSATAAMGQGVTEDQFKSNL</sequence>
<reference key="1">
    <citation type="journal article" date="2004" name="Nature">
        <title>Genome evolution in yeasts.</title>
        <authorList>
            <person name="Dujon B."/>
            <person name="Sherman D."/>
            <person name="Fischer G."/>
            <person name="Durrens P."/>
            <person name="Casaregola S."/>
            <person name="Lafontaine I."/>
            <person name="de Montigny J."/>
            <person name="Marck C."/>
            <person name="Neuveglise C."/>
            <person name="Talla E."/>
            <person name="Goffard N."/>
            <person name="Frangeul L."/>
            <person name="Aigle M."/>
            <person name="Anthouard V."/>
            <person name="Babour A."/>
            <person name="Barbe V."/>
            <person name="Barnay S."/>
            <person name="Blanchin S."/>
            <person name="Beckerich J.-M."/>
            <person name="Beyne E."/>
            <person name="Bleykasten C."/>
            <person name="Boisrame A."/>
            <person name="Boyer J."/>
            <person name="Cattolico L."/>
            <person name="Confanioleri F."/>
            <person name="de Daruvar A."/>
            <person name="Despons L."/>
            <person name="Fabre E."/>
            <person name="Fairhead C."/>
            <person name="Ferry-Dumazet H."/>
            <person name="Groppi A."/>
            <person name="Hantraye F."/>
            <person name="Hennequin C."/>
            <person name="Jauniaux N."/>
            <person name="Joyet P."/>
            <person name="Kachouri R."/>
            <person name="Kerrest A."/>
            <person name="Koszul R."/>
            <person name="Lemaire M."/>
            <person name="Lesur I."/>
            <person name="Ma L."/>
            <person name="Muller H."/>
            <person name="Nicaud J.-M."/>
            <person name="Nikolski M."/>
            <person name="Oztas S."/>
            <person name="Ozier-Kalogeropoulos O."/>
            <person name="Pellenz S."/>
            <person name="Potier S."/>
            <person name="Richard G.-F."/>
            <person name="Straub M.-L."/>
            <person name="Suleau A."/>
            <person name="Swennen D."/>
            <person name="Tekaia F."/>
            <person name="Wesolowski-Louvel M."/>
            <person name="Westhof E."/>
            <person name="Wirth B."/>
            <person name="Zeniou-Meyer M."/>
            <person name="Zivanovic Y."/>
            <person name="Bolotin-Fukuhara M."/>
            <person name="Thierry A."/>
            <person name="Bouchier C."/>
            <person name="Caudron B."/>
            <person name="Scarpelli C."/>
            <person name="Gaillardin C."/>
            <person name="Weissenbach J."/>
            <person name="Wincker P."/>
            <person name="Souciet J.-L."/>
        </authorList>
    </citation>
    <scope>NUCLEOTIDE SEQUENCE [LARGE SCALE GENOMIC DNA]</scope>
    <source>
        <strain>ATCC 2001 / BCRC 20586 / JCM 3761 / NBRC 0622 / NRRL Y-65 / CBS 138</strain>
    </source>
</reference>
<evidence type="ECO:0000250" key="1">
    <source>
        <dbReference type="UniProtKB" id="P28240"/>
    </source>
</evidence>
<evidence type="ECO:0000250" key="2">
    <source>
        <dbReference type="UniProtKB" id="P28299"/>
    </source>
</evidence>
<evidence type="ECO:0000250" key="3">
    <source>
        <dbReference type="UniProtKB" id="P9WKK7"/>
    </source>
</evidence>
<evidence type="ECO:0000255" key="4"/>
<evidence type="ECO:0000305" key="5"/>
<organism>
    <name type="scientific">Candida glabrata (strain ATCC 2001 / BCRC 20586 / JCM 3761 / NBRC 0622 / NRRL Y-65 / CBS 138)</name>
    <name type="common">Yeast</name>
    <name type="synonym">Nakaseomyces glabratus</name>
    <dbReference type="NCBI Taxonomy" id="284593"/>
    <lineage>
        <taxon>Eukaryota</taxon>
        <taxon>Fungi</taxon>
        <taxon>Dikarya</taxon>
        <taxon>Ascomycota</taxon>
        <taxon>Saccharomycotina</taxon>
        <taxon>Saccharomycetes</taxon>
        <taxon>Saccharomycetales</taxon>
        <taxon>Saccharomycetaceae</taxon>
        <taxon>Nakaseomyces</taxon>
    </lineage>
</organism>
<gene>
    <name evidence="1" type="primary">ICL1</name>
    <name type="ordered locus">CAGL0J03058g</name>
</gene>
<comment type="function">
    <text evidence="1">Catalyzes the formation of succinate and glyoxylate from isocitrate, a key step of the glyoxylate cycle, which operates as an anaplerotic route for replenishing the tricarboxylic acid cycle. Required for growth on ethanol or acetate, but dispensable when fermentable carbon sources are available. Also acts on 2-methylisocitrate.</text>
</comment>
<comment type="catalytic activity">
    <reaction evidence="1">
        <text>D-threo-isocitrate = glyoxylate + succinate</text>
        <dbReference type="Rhea" id="RHEA:13245"/>
        <dbReference type="ChEBI" id="CHEBI:15562"/>
        <dbReference type="ChEBI" id="CHEBI:30031"/>
        <dbReference type="ChEBI" id="CHEBI:36655"/>
        <dbReference type="EC" id="4.1.3.1"/>
    </reaction>
</comment>
<comment type="catalytic activity">
    <reaction evidence="1">
        <text>(2S,3R)-3-hydroxybutane-1,2,3-tricarboxylate = pyruvate + succinate</text>
        <dbReference type="Rhea" id="RHEA:16809"/>
        <dbReference type="ChEBI" id="CHEBI:15361"/>
        <dbReference type="ChEBI" id="CHEBI:30031"/>
        <dbReference type="ChEBI" id="CHEBI:57429"/>
        <dbReference type="EC" id="4.1.3.30"/>
    </reaction>
</comment>
<comment type="cofactor">
    <cofactor evidence="3">
        <name>Mg(2+)</name>
        <dbReference type="ChEBI" id="CHEBI:18420"/>
    </cofactor>
</comment>
<comment type="pathway">
    <text>Carbohydrate metabolism; glyoxylate cycle; (S)-malate from isocitrate: step 1/2.</text>
</comment>
<comment type="subunit">
    <text evidence="1">Homotetramer.</text>
</comment>
<comment type="subcellular location">
    <subcellularLocation>
        <location evidence="2">Glyoxysome</location>
    </subcellularLocation>
</comment>
<comment type="similarity">
    <text evidence="5">Belongs to the isocitrate lyase/PEP mutase superfamily. Isocitrate lyase family.</text>
</comment>
<feature type="chain" id="PRO_0000068785" description="Isocitrate lyase">
    <location>
        <begin position="1"/>
        <end position="553"/>
    </location>
</feature>
<feature type="short sequence motif" description="Microbody targeting signal" evidence="4">
    <location>
        <begin position="551"/>
        <end position="553"/>
    </location>
</feature>
<feature type="active site" description="Proton acceptor" evidence="3">
    <location>
        <position position="216"/>
    </location>
</feature>
<feature type="binding site" evidence="3">
    <location>
        <begin position="105"/>
        <end position="107"/>
    </location>
    <ligand>
        <name>substrate</name>
    </ligand>
</feature>
<feature type="binding site" evidence="3">
    <location>
        <position position="178"/>
    </location>
    <ligand>
        <name>Mg(2+)</name>
        <dbReference type="ChEBI" id="CHEBI:18420"/>
    </ligand>
</feature>
<feature type="binding site" evidence="3">
    <location>
        <begin position="217"/>
        <end position="218"/>
    </location>
    <ligand>
        <name>substrate</name>
    </ligand>
</feature>
<feature type="binding site" evidence="3">
    <location>
        <position position="253"/>
    </location>
    <ligand>
        <name>substrate</name>
    </ligand>
</feature>
<feature type="binding site" evidence="3">
    <location>
        <begin position="436"/>
        <end position="440"/>
    </location>
    <ligand>
        <name>substrate</name>
    </ligand>
</feature>
<feature type="binding site" evidence="3">
    <location>
        <position position="470"/>
    </location>
    <ligand>
        <name>substrate</name>
    </ligand>
</feature>
<proteinExistence type="inferred from homology"/>
<keyword id="KW-0329">Glyoxylate bypass</keyword>
<keyword id="KW-0330">Glyoxysome</keyword>
<keyword id="KW-0456">Lyase</keyword>
<keyword id="KW-0460">Magnesium</keyword>
<keyword id="KW-0479">Metal-binding</keyword>
<keyword id="KW-0576">Peroxisome</keyword>
<keyword id="KW-1185">Reference proteome</keyword>
<keyword id="KW-0816">Tricarboxylic acid cycle</keyword>
<accession>Q6FPK7</accession>
<name>ACEA_CANGA</name>
<protein>
    <recommendedName>
        <fullName evidence="1">Isocitrate lyase</fullName>
        <shortName evidence="5">ICL</shortName>
        <shortName evidence="5">Isocitrase</shortName>
        <shortName evidence="5">Isocitratase</shortName>
        <ecNumber evidence="1">4.1.3.1</ecNumber>
    </recommendedName>
    <alternativeName>
        <fullName evidence="1">Methylisocitrate lyase</fullName>
        <shortName evidence="5">MICA</shortName>
        <ecNumber evidence="1">4.1.3.30</ecNumber>
    </alternativeName>
    <alternativeName>
        <fullName evidence="5">Threo-D(S)-isocitrate glyoxylate-lyase</fullName>
    </alternativeName>
</protein>
<dbReference type="EC" id="4.1.3.1" evidence="1"/>
<dbReference type="EC" id="4.1.3.30" evidence="1"/>
<dbReference type="EMBL" id="CR380956">
    <property type="protein sequence ID" value="CAG60786.2"/>
    <property type="molecule type" value="Genomic_DNA"/>
</dbReference>
<dbReference type="RefSeq" id="XP_447837.2">
    <property type="nucleotide sequence ID" value="XM_447837.2"/>
</dbReference>
<dbReference type="SMR" id="Q6FPK7"/>
<dbReference type="FunCoup" id="Q6FPK7">
    <property type="interactions" value="205"/>
</dbReference>
<dbReference type="STRING" id="284593.Q6FPK7"/>
<dbReference type="EnsemblFungi" id="CAGL0J03058g-T">
    <property type="protein sequence ID" value="CAGL0J03058g-T-p1"/>
    <property type="gene ID" value="CAGL0J03058g"/>
</dbReference>
<dbReference type="KEGG" id="cgr:2889724"/>
<dbReference type="CGD" id="CAL0133590">
    <property type="gene designation" value="ICL1"/>
</dbReference>
<dbReference type="VEuPathDB" id="FungiDB:B1J91_J03058g"/>
<dbReference type="VEuPathDB" id="FungiDB:CAGL0J03058g"/>
<dbReference type="eggNOG" id="KOG1260">
    <property type="taxonomic scope" value="Eukaryota"/>
</dbReference>
<dbReference type="HOGENOM" id="CLU_019214_2_2_1"/>
<dbReference type="InParanoid" id="Q6FPK7"/>
<dbReference type="OMA" id="YVSGWQV"/>
<dbReference type="UniPathway" id="UPA00703">
    <property type="reaction ID" value="UER00719"/>
</dbReference>
<dbReference type="PHI-base" id="PHI:8917"/>
<dbReference type="Proteomes" id="UP000002428">
    <property type="component" value="Chromosome J"/>
</dbReference>
<dbReference type="GO" id="GO:0009514">
    <property type="term" value="C:glyoxysome"/>
    <property type="evidence" value="ECO:0007669"/>
    <property type="project" value="UniProtKB-SubCell"/>
</dbReference>
<dbReference type="GO" id="GO:0004451">
    <property type="term" value="F:isocitrate lyase activity"/>
    <property type="evidence" value="ECO:0007669"/>
    <property type="project" value="UniProtKB-EC"/>
</dbReference>
<dbReference type="GO" id="GO:0046872">
    <property type="term" value="F:metal ion binding"/>
    <property type="evidence" value="ECO:0007669"/>
    <property type="project" value="UniProtKB-KW"/>
</dbReference>
<dbReference type="GO" id="GO:0046421">
    <property type="term" value="F:methylisocitrate lyase activity"/>
    <property type="evidence" value="ECO:0007669"/>
    <property type="project" value="UniProtKB-EC"/>
</dbReference>
<dbReference type="GO" id="GO:0006097">
    <property type="term" value="P:glyoxylate cycle"/>
    <property type="evidence" value="ECO:0007669"/>
    <property type="project" value="UniProtKB-UniPathway"/>
</dbReference>
<dbReference type="GO" id="GO:0006099">
    <property type="term" value="P:tricarboxylic acid cycle"/>
    <property type="evidence" value="ECO:0007669"/>
    <property type="project" value="UniProtKB-KW"/>
</dbReference>
<dbReference type="CDD" id="cd00377">
    <property type="entry name" value="ICL_PEPM"/>
    <property type="match status" value="1"/>
</dbReference>
<dbReference type="FunFam" id="1.10.10.850:FF:000001">
    <property type="entry name" value="Isocitrate lyase"/>
    <property type="match status" value="1"/>
</dbReference>
<dbReference type="Gene3D" id="1.10.10.850">
    <property type="match status" value="1"/>
</dbReference>
<dbReference type="Gene3D" id="3.20.20.60">
    <property type="entry name" value="Phosphoenolpyruvate-binding domains"/>
    <property type="match status" value="1"/>
</dbReference>
<dbReference type="InterPro" id="IPR039556">
    <property type="entry name" value="ICL/PEPM"/>
</dbReference>
<dbReference type="InterPro" id="IPR006254">
    <property type="entry name" value="Isocitrate_lyase"/>
</dbReference>
<dbReference type="InterPro" id="IPR018523">
    <property type="entry name" value="Isocitrate_lyase_ph_CS"/>
</dbReference>
<dbReference type="InterPro" id="IPR015813">
    <property type="entry name" value="Pyrv/PenolPyrv_kinase-like_dom"/>
</dbReference>
<dbReference type="InterPro" id="IPR040442">
    <property type="entry name" value="Pyrv_kinase-like_dom_sf"/>
</dbReference>
<dbReference type="NCBIfam" id="TIGR01346">
    <property type="entry name" value="isocit_lyase"/>
    <property type="match status" value="1"/>
</dbReference>
<dbReference type="PANTHER" id="PTHR21631:SF3">
    <property type="entry name" value="BIFUNCTIONAL GLYOXYLATE CYCLE PROTEIN"/>
    <property type="match status" value="1"/>
</dbReference>
<dbReference type="PANTHER" id="PTHR21631">
    <property type="entry name" value="ISOCITRATE LYASE/MALATE SYNTHASE"/>
    <property type="match status" value="1"/>
</dbReference>
<dbReference type="Pfam" id="PF00463">
    <property type="entry name" value="ICL"/>
    <property type="match status" value="1"/>
</dbReference>
<dbReference type="PIRSF" id="PIRSF001362">
    <property type="entry name" value="Isocit_lyase"/>
    <property type="match status" value="1"/>
</dbReference>
<dbReference type="SUPFAM" id="SSF51621">
    <property type="entry name" value="Phosphoenolpyruvate/pyruvate domain"/>
    <property type="match status" value="1"/>
</dbReference>
<dbReference type="PROSITE" id="PS00161">
    <property type="entry name" value="ISOCITRATE_LYASE"/>
    <property type="match status" value="1"/>
</dbReference>